<protein>
    <recommendedName>
        <fullName>Tail-specific protease</fullName>
        <ecNumber>3.4.21.102</ecNumber>
    </recommendedName>
    <alternativeName>
        <fullName>C-terminal-processing peptidase</fullName>
    </alternativeName>
    <alternativeName>
        <fullName>PRC protein</fullName>
    </alternativeName>
    <alternativeName>
        <fullName>Protease Re</fullName>
    </alternativeName>
</protein>
<proteinExistence type="inferred from homology"/>
<name>PRC_SALTY</name>
<dbReference type="EC" id="3.4.21.102"/>
<dbReference type="EMBL" id="AE006468">
    <property type="protein sequence ID" value="AAL20760.1"/>
    <property type="molecule type" value="Genomic_DNA"/>
</dbReference>
<dbReference type="EMBL" id="U06136">
    <property type="status" value="NOT_ANNOTATED_CDS"/>
    <property type="molecule type" value="Genomic_DNA"/>
</dbReference>
<dbReference type="RefSeq" id="NP_460801.1">
    <property type="nucleotide sequence ID" value="NC_003197.2"/>
</dbReference>
<dbReference type="RefSeq" id="WP_001091237.1">
    <property type="nucleotide sequence ID" value="NC_003197.2"/>
</dbReference>
<dbReference type="SMR" id="P43669"/>
<dbReference type="STRING" id="99287.STM1845"/>
<dbReference type="MEROPS" id="S41.001"/>
<dbReference type="PaxDb" id="99287-STM1845"/>
<dbReference type="GeneID" id="1253364"/>
<dbReference type="KEGG" id="stm:STM1845"/>
<dbReference type="PATRIC" id="fig|99287.12.peg.1947"/>
<dbReference type="HOGENOM" id="CLU_016199_1_0_6"/>
<dbReference type="OMA" id="LPEAMPW"/>
<dbReference type="PhylomeDB" id="P43669"/>
<dbReference type="BioCyc" id="SENT99287:STM1845-MONOMER"/>
<dbReference type="Proteomes" id="UP000001014">
    <property type="component" value="Chromosome"/>
</dbReference>
<dbReference type="GO" id="GO:0030288">
    <property type="term" value="C:outer membrane-bounded periplasmic space"/>
    <property type="evidence" value="ECO:0000318"/>
    <property type="project" value="GO_Central"/>
</dbReference>
<dbReference type="GO" id="GO:0005886">
    <property type="term" value="C:plasma membrane"/>
    <property type="evidence" value="ECO:0007669"/>
    <property type="project" value="UniProtKB-SubCell"/>
</dbReference>
<dbReference type="GO" id="GO:0004175">
    <property type="term" value="F:endopeptidase activity"/>
    <property type="evidence" value="ECO:0000318"/>
    <property type="project" value="GO_Central"/>
</dbReference>
<dbReference type="GO" id="GO:0004252">
    <property type="term" value="F:serine-type endopeptidase activity"/>
    <property type="evidence" value="ECO:0007669"/>
    <property type="project" value="UniProtKB-EC"/>
</dbReference>
<dbReference type="GO" id="GO:0006508">
    <property type="term" value="P:proteolysis"/>
    <property type="evidence" value="ECO:0007669"/>
    <property type="project" value="UniProtKB-KW"/>
</dbReference>
<dbReference type="GO" id="GO:0007165">
    <property type="term" value="P:signal transduction"/>
    <property type="evidence" value="ECO:0000318"/>
    <property type="project" value="GO_Central"/>
</dbReference>
<dbReference type="CDD" id="cd06782">
    <property type="entry name" value="cpPDZ_CPP-like"/>
    <property type="match status" value="1"/>
</dbReference>
<dbReference type="CDD" id="cd07560">
    <property type="entry name" value="Peptidase_S41_CPP"/>
    <property type="match status" value="1"/>
</dbReference>
<dbReference type="FunFam" id="3.90.226.10:FF:000015">
    <property type="entry name" value="Periplasmic tail-specific protease"/>
    <property type="match status" value="1"/>
</dbReference>
<dbReference type="FunFam" id="2.30.42.10:FF:000083">
    <property type="entry name" value="Tail-specific protease"/>
    <property type="match status" value="1"/>
</dbReference>
<dbReference type="Gene3D" id="2.30.42.10">
    <property type="match status" value="1"/>
</dbReference>
<dbReference type="Gene3D" id="3.30.750.44">
    <property type="match status" value="1"/>
</dbReference>
<dbReference type="Gene3D" id="3.90.226.10">
    <property type="entry name" value="2-enoyl-CoA Hydratase, Chain A, domain 1"/>
    <property type="match status" value="1"/>
</dbReference>
<dbReference type="InterPro" id="IPR029045">
    <property type="entry name" value="ClpP/crotonase-like_dom_sf"/>
</dbReference>
<dbReference type="InterPro" id="IPR001478">
    <property type="entry name" value="PDZ"/>
</dbReference>
<dbReference type="InterPro" id="IPR036034">
    <property type="entry name" value="PDZ_sf"/>
</dbReference>
<dbReference type="InterPro" id="IPR004447">
    <property type="entry name" value="Peptidase_S41A"/>
</dbReference>
<dbReference type="InterPro" id="IPR005151">
    <property type="entry name" value="Tail-specific_protease"/>
</dbReference>
<dbReference type="InterPro" id="IPR020992">
    <property type="entry name" value="Tail_Prtase_C"/>
</dbReference>
<dbReference type="InterPro" id="IPR040573">
    <property type="entry name" value="TSP_N"/>
</dbReference>
<dbReference type="NCBIfam" id="TIGR00225">
    <property type="entry name" value="prc"/>
    <property type="match status" value="1"/>
</dbReference>
<dbReference type="NCBIfam" id="NF008388">
    <property type="entry name" value="PRK11186.1"/>
    <property type="match status" value="1"/>
</dbReference>
<dbReference type="PANTHER" id="PTHR32060:SF22">
    <property type="entry name" value="CARBOXYL-TERMINAL-PROCESSING PEPTIDASE 3, CHLOROPLASTIC"/>
    <property type="match status" value="1"/>
</dbReference>
<dbReference type="PANTHER" id="PTHR32060">
    <property type="entry name" value="TAIL-SPECIFIC PROTEASE"/>
    <property type="match status" value="1"/>
</dbReference>
<dbReference type="Pfam" id="PF11818">
    <property type="entry name" value="DUF3340"/>
    <property type="match status" value="1"/>
</dbReference>
<dbReference type="Pfam" id="PF00595">
    <property type="entry name" value="PDZ"/>
    <property type="match status" value="1"/>
</dbReference>
<dbReference type="Pfam" id="PF03572">
    <property type="entry name" value="Peptidase_S41"/>
    <property type="match status" value="1"/>
</dbReference>
<dbReference type="Pfam" id="PF17804">
    <property type="entry name" value="TSP_NTD"/>
    <property type="match status" value="1"/>
</dbReference>
<dbReference type="SMART" id="SM00228">
    <property type="entry name" value="PDZ"/>
    <property type="match status" value="1"/>
</dbReference>
<dbReference type="SMART" id="SM00245">
    <property type="entry name" value="TSPc"/>
    <property type="match status" value="1"/>
</dbReference>
<dbReference type="SUPFAM" id="SSF52096">
    <property type="entry name" value="ClpP/crotonase"/>
    <property type="match status" value="1"/>
</dbReference>
<dbReference type="SUPFAM" id="SSF50156">
    <property type="entry name" value="PDZ domain-like"/>
    <property type="match status" value="1"/>
</dbReference>
<dbReference type="PROSITE" id="PS50106">
    <property type="entry name" value="PDZ"/>
    <property type="match status" value="1"/>
</dbReference>
<organism>
    <name type="scientific">Salmonella typhimurium (strain LT2 / SGSC1412 / ATCC 700720)</name>
    <dbReference type="NCBI Taxonomy" id="99287"/>
    <lineage>
        <taxon>Bacteria</taxon>
        <taxon>Pseudomonadati</taxon>
        <taxon>Pseudomonadota</taxon>
        <taxon>Gammaproteobacteria</taxon>
        <taxon>Enterobacterales</taxon>
        <taxon>Enterobacteriaceae</taxon>
        <taxon>Salmonella</taxon>
    </lineage>
</organism>
<comment type="function">
    <text evidence="1">Involved in the cleavage of a C-terminal peptide of 11 residues from the precursor form of penicillin-binding protein 3 (PBP3). May be involved in protection of the bacterium from thermal and osmotic stresses (By similarity).</text>
</comment>
<comment type="catalytic activity">
    <reaction>
        <text>The enzyme shows specific recognition of a C-terminal tripeptide, Xaa-Yaa-Zaa, in which Xaa is preferably Ala or Leu, Yaa is preferably Ala or Tyr, and Zaa is preferably Ala, but then cleaves at a variable distance from the C-terminus. A typical cleavage is -Ala-Ala-|-Arg-Ala-Ala-Lys-Glu-Asn-Tyr-Ala-Leu-Ala-Ala.</text>
        <dbReference type="EC" id="3.4.21.102"/>
    </reaction>
</comment>
<comment type="subcellular location">
    <subcellularLocation>
        <location evidence="1">Cell inner membrane</location>
        <topology evidence="1">Peripheral membrane protein</topology>
        <orientation evidence="1">Periplasmic side</orientation>
    </subcellularLocation>
</comment>
<comment type="similarity">
    <text evidence="4">Belongs to the peptidase S41A family.</text>
</comment>
<accession>P43669</accession>
<sequence>MNTFFRLTALAGLLALAGQSFAVEDITRADQIPVLKEETQHATVSERVTSRFTRSHYRQFDLDEAFSAKIFDRYLNLLDYSHNVLLASDVEQFAKKKTVLGDELRTGKLDVFYDLYNLAQKRRFERYQYALKVLERPMDFTGNDTFNLDRSKAPWPKDEAELNALWDGKVKFDELSLKLTGKSDKEIRETLTRRYKFAIRRLAQTNSEDVFSLAMTAFAREIDPHTNYLSPRNTEQFNTEMSLSLEGIGAVLQMDDDYTVINSLVAGGPAAKSKSISVGDRIVGVGQAGKPMVDVIGWRLDDVVALIKGPKGSKVRLEILPAGKGTKTRIITLTRERIRLEDRAVKMSVKTVGKEKVGVLDIPGFYVGLTDDVKVQLQKLEKQNVNSIVIDLRSNGGGALTEAVSLSGLFIPSGPIVQVRDNNGKVREDSDTDGVVYYKGPLVVLVDRFSASASEIFAAAMQDYGRALIVGEPTFGKGTVQQYRSLNRIYDQMLRPEWPALGSVQYTIQKFYRVNGGSTQRKGVTPDIIMPTGNEETETGEKFEDNALPWDSIDAAKYVKSDDLAPFGPELLKEHNARIAKDPEFQYIMKDIARFNAMKDKRNIVSLNYAQREKENNEEDALRLARINDRFKREGKPLLKKLDDLPKDYQEPDPYLDETVKIALDLAHLEKEKPAEQAAANK</sequence>
<reference key="1">
    <citation type="journal article" date="2001" name="Nature">
        <title>Complete genome sequence of Salmonella enterica serovar Typhimurium LT2.</title>
        <authorList>
            <person name="McClelland M."/>
            <person name="Sanderson K.E."/>
            <person name="Spieth J."/>
            <person name="Clifton S.W."/>
            <person name="Latreille P."/>
            <person name="Courtney L."/>
            <person name="Porwollik S."/>
            <person name="Ali J."/>
            <person name="Dante M."/>
            <person name="Du F."/>
            <person name="Hou S."/>
            <person name="Layman D."/>
            <person name="Leonard S."/>
            <person name="Nguyen C."/>
            <person name="Scott K."/>
            <person name="Holmes A."/>
            <person name="Grewal N."/>
            <person name="Mulvaney E."/>
            <person name="Ryan E."/>
            <person name="Sun H."/>
            <person name="Florea L."/>
            <person name="Miller W."/>
            <person name="Stoneking T."/>
            <person name="Nhan M."/>
            <person name="Waterston R."/>
            <person name="Wilson R.K."/>
        </authorList>
    </citation>
    <scope>NUCLEOTIDE SEQUENCE [LARGE SCALE GENOMIC DNA]</scope>
    <source>
        <strain>LT2 / SGSC1412 / ATCC 700720</strain>
    </source>
</reference>
<reference key="2">
    <citation type="journal article" date="1994" name="Infect. Immun.">
        <title>Salmonella typhimurium loci involved in survival within macrophages.</title>
        <authorList>
            <person name="Baumler A.J."/>
            <person name="Kusters J.G."/>
            <person name="Stojiljkovic I."/>
            <person name="Heffron F."/>
        </authorList>
    </citation>
    <scope>NUCLEOTIDE SEQUENCE [GENOMIC DNA] OF 610-622</scope>
    <source>
        <strain>ATCC 14028 / Isolate MS4290</strain>
    </source>
</reference>
<gene>
    <name type="primary">prc</name>
    <name type="ordered locus">STM1845</name>
</gene>
<feature type="signal peptide" evidence="2">
    <location>
        <begin position="1"/>
        <end position="22"/>
    </location>
</feature>
<feature type="chain" id="PRO_0000027332" description="Tail-specific protease">
    <location>
        <begin position="23"/>
        <end position="682"/>
    </location>
</feature>
<feature type="domain" description="PDZ" evidence="3">
    <location>
        <begin position="238"/>
        <end position="322"/>
    </location>
</feature>
<feature type="active site" description="Charge relay system" evidence="1">
    <location>
        <position position="452"/>
    </location>
</feature>
<feature type="active site" description="Charge relay system" evidence="1">
    <location>
        <position position="463"/>
    </location>
</feature>
<feature type="active site" description="Charge relay system" evidence="1">
    <location>
        <position position="477"/>
    </location>
</feature>
<feature type="sequence conflict" description="In Ref. 2." evidence="4" ref="2">
    <original>AL</original>
    <variation>SS</variation>
    <location>
        <begin position="621"/>
        <end position="622"/>
    </location>
</feature>
<evidence type="ECO:0000250" key="1"/>
<evidence type="ECO:0000255" key="2"/>
<evidence type="ECO:0000255" key="3">
    <source>
        <dbReference type="PROSITE-ProRule" id="PRU00143"/>
    </source>
</evidence>
<evidence type="ECO:0000305" key="4"/>
<keyword id="KW-0997">Cell inner membrane</keyword>
<keyword id="KW-1003">Cell membrane</keyword>
<keyword id="KW-0378">Hydrolase</keyword>
<keyword id="KW-0472">Membrane</keyword>
<keyword id="KW-0645">Protease</keyword>
<keyword id="KW-1185">Reference proteome</keyword>
<keyword id="KW-0720">Serine protease</keyword>
<keyword id="KW-0732">Signal</keyword>